<keyword id="KW-0143">Chaperone</keyword>
<keyword id="KW-1185">Reference proteome</keyword>
<sequence length="174" mass="20431">MFNPFQIFDLPVDFQLDEKVLNARYLKLQKALHPDNFVSSNALDQRVAMQKSTEVNDALKTLKDPILRAEAIIALNTGEQLDLEQKSTQDVAFLMQQLQWREQLEEVERQQDERALNAFAKEIKQETQSLLTALFESLKSQQWARASQYCDKLRFTHKLSEEIERVEERIFELD</sequence>
<reference key="1">
    <citation type="journal article" date="1995" name="Science">
        <title>Whole-genome random sequencing and assembly of Haemophilus influenzae Rd.</title>
        <authorList>
            <person name="Fleischmann R.D."/>
            <person name="Adams M.D."/>
            <person name="White O."/>
            <person name="Clayton R.A."/>
            <person name="Kirkness E.F."/>
            <person name="Kerlavage A.R."/>
            <person name="Bult C.J."/>
            <person name="Tomb J.-F."/>
            <person name="Dougherty B.A."/>
            <person name="Merrick J.M."/>
            <person name="McKenney K."/>
            <person name="Sutton G.G."/>
            <person name="FitzHugh W."/>
            <person name="Fields C.A."/>
            <person name="Gocayne J.D."/>
            <person name="Scott J.D."/>
            <person name="Shirley R."/>
            <person name="Liu L.-I."/>
            <person name="Glodek A."/>
            <person name="Kelley J.M."/>
            <person name="Weidman J.F."/>
            <person name="Phillips C.A."/>
            <person name="Spriggs T."/>
            <person name="Hedblom E."/>
            <person name="Cotton M.D."/>
            <person name="Utterback T.R."/>
            <person name="Hanna M.C."/>
            <person name="Nguyen D.T."/>
            <person name="Saudek D.M."/>
            <person name="Brandon R.C."/>
            <person name="Fine L.D."/>
            <person name="Fritchman J.L."/>
            <person name="Fuhrmann J.L."/>
            <person name="Geoghagen N.S.M."/>
            <person name="Gnehm C.L."/>
            <person name="McDonald L.A."/>
            <person name="Small K.V."/>
            <person name="Fraser C.M."/>
            <person name="Smith H.O."/>
            <person name="Venter J.C."/>
        </authorList>
    </citation>
    <scope>NUCLEOTIDE SEQUENCE [LARGE SCALE GENOMIC DNA]</scope>
    <source>
        <strain>ATCC 51907 / DSM 11121 / KW20 / Rd</strain>
    </source>
</reference>
<accession>Q57006</accession>
<accession>P96333</accession>
<gene>
    <name type="primary">hscB</name>
    <name type="ordered locus">HI_0375</name>
</gene>
<comment type="function">
    <text evidence="1">Co-chaperone involved in the maturation of iron-sulfur cluster-containing proteins. Seems to help targeting proteins to be folded toward HscA (By similarity).</text>
</comment>
<comment type="subunit">
    <text evidence="1">Interacts with HscA and stimulates its ATPase activity.</text>
</comment>
<comment type="similarity">
    <text evidence="2">Belongs to the HscB family.</text>
</comment>
<dbReference type="EMBL" id="L42023">
    <property type="protein sequence ID" value="AAC22032.1"/>
    <property type="molecule type" value="Genomic_DNA"/>
</dbReference>
<dbReference type="PIR" id="D64150">
    <property type="entry name" value="D64150"/>
</dbReference>
<dbReference type="RefSeq" id="NP_438536.1">
    <property type="nucleotide sequence ID" value="NC_000907.1"/>
</dbReference>
<dbReference type="SMR" id="Q57006"/>
<dbReference type="STRING" id="71421.HI_0375"/>
<dbReference type="EnsemblBacteria" id="AAC22032">
    <property type="protein sequence ID" value="AAC22032"/>
    <property type="gene ID" value="HI_0375"/>
</dbReference>
<dbReference type="KEGG" id="hin:HI_0375"/>
<dbReference type="PATRIC" id="fig|71421.8.peg.393"/>
<dbReference type="eggNOG" id="COG1076">
    <property type="taxonomic scope" value="Bacteria"/>
</dbReference>
<dbReference type="HOGENOM" id="CLU_068529_2_0_6"/>
<dbReference type="OrthoDB" id="287587at2"/>
<dbReference type="PhylomeDB" id="Q57006"/>
<dbReference type="BioCyc" id="HINF71421:G1GJ1-388-MONOMER"/>
<dbReference type="Proteomes" id="UP000000579">
    <property type="component" value="Chromosome"/>
</dbReference>
<dbReference type="GO" id="GO:1990230">
    <property type="term" value="C:iron-sulfur cluster transfer complex"/>
    <property type="evidence" value="ECO:0000318"/>
    <property type="project" value="GO_Central"/>
</dbReference>
<dbReference type="GO" id="GO:0001671">
    <property type="term" value="F:ATPase activator activity"/>
    <property type="evidence" value="ECO:0007669"/>
    <property type="project" value="InterPro"/>
</dbReference>
<dbReference type="GO" id="GO:0051087">
    <property type="term" value="F:protein-folding chaperone binding"/>
    <property type="evidence" value="ECO:0007669"/>
    <property type="project" value="InterPro"/>
</dbReference>
<dbReference type="GO" id="GO:0044571">
    <property type="term" value="P:[2Fe-2S] cluster assembly"/>
    <property type="evidence" value="ECO:0007669"/>
    <property type="project" value="InterPro"/>
</dbReference>
<dbReference type="GO" id="GO:0051259">
    <property type="term" value="P:protein complex oligomerization"/>
    <property type="evidence" value="ECO:0007669"/>
    <property type="project" value="InterPro"/>
</dbReference>
<dbReference type="GO" id="GO:0006457">
    <property type="term" value="P:protein folding"/>
    <property type="evidence" value="ECO:0007669"/>
    <property type="project" value="UniProtKB-UniRule"/>
</dbReference>
<dbReference type="CDD" id="cd06257">
    <property type="entry name" value="DnaJ"/>
    <property type="match status" value="1"/>
</dbReference>
<dbReference type="Gene3D" id="1.10.287.110">
    <property type="entry name" value="DnaJ domain"/>
    <property type="match status" value="1"/>
</dbReference>
<dbReference type="Gene3D" id="1.20.1280.20">
    <property type="entry name" value="HscB, C-terminal domain"/>
    <property type="match status" value="1"/>
</dbReference>
<dbReference type="HAMAP" id="MF_00682">
    <property type="entry name" value="HscB"/>
    <property type="match status" value="1"/>
</dbReference>
<dbReference type="InterPro" id="IPR001623">
    <property type="entry name" value="DnaJ_domain"/>
</dbReference>
<dbReference type="InterPro" id="IPR004640">
    <property type="entry name" value="HscB"/>
</dbReference>
<dbReference type="InterPro" id="IPR036386">
    <property type="entry name" value="HscB_C_sf"/>
</dbReference>
<dbReference type="InterPro" id="IPR009073">
    <property type="entry name" value="HscB_oligo_C"/>
</dbReference>
<dbReference type="InterPro" id="IPR036869">
    <property type="entry name" value="J_dom_sf"/>
</dbReference>
<dbReference type="NCBIfam" id="TIGR00714">
    <property type="entry name" value="hscB"/>
    <property type="match status" value="1"/>
</dbReference>
<dbReference type="PANTHER" id="PTHR14021">
    <property type="entry name" value="IRON-SULFUR CLUSTER CO-CHAPERONE PROTEIN HSCB"/>
    <property type="match status" value="1"/>
</dbReference>
<dbReference type="PANTHER" id="PTHR14021:SF15">
    <property type="entry name" value="IRON-SULFUR CLUSTER CO-CHAPERONE PROTEIN HSCB"/>
    <property type="match status" value="1"/>
</dbReference>
<dbReference type="Pfam" id="PF07743">
    <property type="entry name" value="HSCB_C"/>
    <property type="match status" value="1"/>
</dbReference>
<dbReference type="SMART" id="SM00271">
    <property type="entry name" value="DnaJ"/>
    <property type="match status" value="1"/>
</dbReference>
<dbReference type="SUPFAM" id="SSF46565">
    <property type="entry name" value="Chaperone J-domain"/>
    <property type="match status" value="1"/>
</dbReference>
<dbReference type="SUPFAM" id="SSF47144">
    <property type="entry name" value="HSC20 (HSCB), C-terminal oligomerisation domain"/>
    <property type="match status" value="1"/>
</dbReference>
<name>HSCB_HAEIN</name>
<evidence type="ECO:0000250" key="1"/>
<evidence type="ECO:0000305" key="2"/>
<feature type="chain" id="PRO_0000070971" description="Co-chaperone protein HscB homolog">
    <location>
        <begin position="1"/>
        <end position="174"/>
    </location>
</feature>
<feature type="domain" description="J">
    <location>
        <begin position="3"/>
        <end position="75"/>
    </location>
</feature>
<proteinExistence type="inferred from homology"/>
<organism>
    <name type="scientific">Haemophilus influenzae (strain ATCC 51907 / DSM 11121 / KW20 / Rd)</name>
    <dbReference type="NCBI Taxonomy" id="71421"/>
    <lineage>
        <taxon>Bacteria</taxon>
        <taxon>Pseudomonadati</taxon>
        <taxon>Pseudomonadota</taxon>
        <taxon>Gammaproteobacteria</taxon>
        <taxon>Pasteurellales</taxon>
        <taxon>Pasteurellaceae</taxon>
        <taxon>Haemophilus</taxon>
    </lineage>
</organism>
<protein>
    <recommendedName>
        <fullName>Co-chaperone protein HscB homolog</fullName>
    </recommendedName>
</protein>